<comment type="function">
    <text evidence="1">Involved in chromosome condensation, segregation and cell cycle progression. May participate in facilitating chromosome segregation by condensation DNA from both sides of a centrally located replisome during cell division. Not required for mini-F plasmid partitioning. Probably acts via its interaction with MukB and MukE. Overexpression results in anucleate cells. It has a calcium binding activity.</text>
</comment>
<comment type="subunit">
    <text evidence="1">Interacts, and probably forms a ternary complex, with MukE and MukB via its C-terminal region. The complex formation is stimulated by calcium or magnesium. It is required for an interaction between MukE and MukB.</text>
</comment>
<comment type="subcellular location">
    <subcellularLocation>
        <location evidence="1">Cytoplasm</location>
        <location evidence="1">Nucleoid</location>
    </subcellularLocation>
    <text evidence="1">Restricted to the nucleoid region.</text>
</comment>
<comment type="similarity">
    <text evidence="1">Belongs to the MukF family.</text>
</comment>
<proteinExistence type="inferred from homology"/>
<keyword id="KW-0106">Calcium</keyword>
<keyword id="KW-0131">Cell cycle</keyword>
<keyword id="KW-0132">Cell division</keyword>
<keyword id="KW-0159">Chromosome partition</keyword>
<keyword id="KW-0963">Cytoplasm</keyword>
<keyword id="KW-0226">DNA condensation</keyword>
<protein>
    <recommendedName>
        <fullName evidence="1">Chromosome partition protein MukF</fullName>
    </recommendedName>
</protein>
<feature type="chain" id="PRO_1000088226" description="Chromosome partition protein MukF">
    <location>
        <begin position="1"/>
        <end position="440"/>
    </location>
</feature>
<feature type="region of interest" description="Leucine-zipper">
    <location>
        <begin position="208"/>
        <end position="236"/>
    </location>
</feature>
<sequence length="440" mass="50491">MSEFSQTVPELVAWARKNDFSISLPVDRLSFLLAVATLNGERLDGEMSEGELVDAFRHVSDAFEQTSETIGVRANNAINDMVRQRLLNRFTSEQAEGNAIYRLTPLGIGITDYYIRQREFSTLRLSMQLSIVAGELKRAADAAAEGGDEFHWHRNVYAPLKYSVAEIFDSIDLTQRIMDEQQQQVKDDIAQLLNKDWRAAISSCELLLSETSGTLRELQDTLEAAGDKLQANLLRIQDATMTHDDLHFVDRLVFDLQSKLDRIISWGQQSIDLWIGYDRHVHKFIRTAIDMDKNRVFAQRLRQSVQTYFDDPWALTYTNADRLLDMRDEEMALRDDEVTGELPPDLEYEEFNEIREQLAAIIEEQLAIYKTRQTPLDLGLVVREYLAQYPRARHFDVARIVIDQAVRLGVAQADFTGLPAKWQPINDYGAKVQAHVIDKY</sequence>
<organism>
    <name type="scientific">Salmonella paratyphi B (strain ATCC BAA-1250 / SPB7)</name>
    <dbReference type="NCBI Taxonomy" id="1016998"/>
    <lineage>
        <taxon>Bacteria</taxon>
        <taxon>Pseudomonadati</taxon>
        <taxon>Pseudomonadota</taxon>
        <taxon>Gammaproteobacteria</taxon>
        <taxon>Enterobacterales</taxon>
        <taxon>Enterobacteriaceae</taxon>
        <taxon>Salmonella</taxon>
    </lineage>
</organism>
<reference key="1">
    <citation type="submission" date="2007-11" db="EMBL/GenBank/DDBJ databases">
        <authorList>
            <consortium name="The Salmonella enterica serovar Paratyphi B Genome Sequencing Project"/>
            <person name="McClelland M."/>
            <person name="Sanderson E.K."/>
            <person name="Porwollik S."/>
            <person name="Spieth J."/>
            <person name="Clifton W.S."/>
            <person name="Fulton R."/>
            <person name="Cordes M."/>
            <person name="Wollam A."/>
            <person name="Shah N."/>
            <person name="Pepin K."/>
            <person name="Bhonagiri V."/>
            <person name="Nash W."/>
            <person name="Johnson M."/>
            <person name="Thiruvilangam P."/>
            <person name="Wilson R."/>
        </authorList>
    </citation>
    <scope>NUCLEOTIDE SEQUENCE [LARGE SCALE GENOMIC DNA]</scope>
    <source>
        <strain>ATCC BAA-1250 / SPB7</strain>
    </source>
</reference>
<gene>
    <name evidence="1" type="primary">mukF</name>
    <name type="ordered locus">SPAB_02521</name>
</gene>
<accession>A9N7T9</accession>
<dbReference type="EMBL" id="CP000886">
    <property type="protein sequence ID" value="ABX67901.1"/>
    <property type="molecule type" value="Genomic_DNA"/>
</dbReference>
<dbReference type="RefSeq" id="WP_001288831.1">
    <property type="nucleotide sequence ID" value="NC_010102.1"/>
</dbReference>
<dbReference type="SMR" id="A9N7T9"/>
<dbReference type="KEGG" id="spq:SPAB_02521"/>
<dbReference type="PATRIC" id="fig|1016998.12.peg.2388"/>
<dbReference type="HOGENOM" id="CLU_049853_0_0_6"/>
<dbReference type="BioCyc" id="SENT1016998:SPAB_RS10245-MONOMER"/>
<dbReference type="Proteomes" id="UP000008556">
    <property type="component" value="Chromosome"/>
</dbReference>
<dbReference type="GO" id="GO:0005737">
    <property type="term" value="C:cytoplasm"/>
    <property type="evidence" value="ECO:0007669"/>
    <property type="project" value="UniProtKB-UniRule"/>
</dbReference>
<dbReference type="GO" id="GO:0009295">
    <property type="term" value="C:nucleoid"/>
    <property type="evidence" value="ECO:0007669"/>
    <property type="project" value="UniProtKB-SubCell"/>
</dbReference>
<dbReference type="GO" id="GO:0005509">
    <property type="term" value="F:calcium ion binding"/>
    <property type="evidence" value="ECO:0007669"/>
    <property type="project" value="UniProtKB-UniRule"/>
</dbReference>
<dbReference type="GO" id="GO:0051301">
    <property type="term" value="P:cell division"/>
    <property type="evidence" value="ECO:0007669"/>
    <property type="project" value="UniProtKB-KW"/>
</dbReference>
<dbReference type="GO" id="GO:0030261">
    <property type="term" value="P:chromosome condensation"/>
    <property type="evidence" value="ECO:0007669"/>
    <property type="project" value="UniProtKB-KW"/>
</dbReference>
<dbReference type="GO" id="GO:0007059">
    <property type="term" value="P:chromosome segregation"/>
    <property type="evidence" value="ECO:0007669"/>
    <property type="project" value="UniProtKB-UniRule"/>
</dbReference>
<dbReference type="GO" id="GO:0006260">
    <property type="term" value="P:DNA replication"/>
    <property type="evidence" value="ECO:0007669"/>
    <property type="project" value="UniProtKB-UniRule"/>
</dbReference>
<dbReference type="CDD" id="cd16337">
    <property type="entry name" value="MukF_C"/>
    <property type="match status" value="1"/>
</dbReference>
<dbReference type="CDD" id="cd16335">
    <property type="entry name" value="MukF_N"/>
    <property type="match status" value="1"/>
</dbReference>
<dbReference type="Gene3D" id="1.20.58.590">
    <property type="entry name" value="Chromosome partition protein MukF, middle domain"/>
    <property type="match status" value="1"/>
</dbReference>
<dbReference type="Gene3D" id="1.10.225.40">
    <property type="entry name" value="MukF, C-terminal domain"/>
    <property type="match status" value="1"/>
</dbReference>
<dbReference type="Gene3D" id="1.10.10.10">
    <property type="entry name" value="Winged helix-like DNA-binding domain superfamily/Winged helix DNA-binding domain"/>
    <property type="match status" value="1"/>
</dbReference>
<dbReference type="HAMAP" id="MF_01803">
    <property type="entry name" value="MukF"/>
    <property type="match status" value="1"/>
</dbReference>
<dbReference type="InterPro" id="IPR005582">
    <property type="entry name" value="Chromosome_partition_MukF"/>
</dbReference>
<dbReference type="InterPro" id="IPR033441">
    <property type="entry name" value="MukF_C"/>
</dbReference>
<dbReference type="InterPro" id="IPR038198">
    <property type="entry name" value="MukF_C_sf"/>
</dbReference>
<dbReference type="InterPro" id="IPR033440">
    <property type="entry name" value="MukF_M"/>
</dbReference>
<dbReference type="InterPro" id="IPR036141">
    <property type="entry name" value="MukF_M_sp"/>
</dbReference>
<dbReference type="InterPro" id="IPR033439">
    <property type="entry name" value="MukF_WHTH"/>
</dbReference>
<dbReference type="InterPro" id="IPR036388">
    <property type="entry name" value="WH-like_DNA-bd_sf"/>
</dbReference>
<dbReference type="InterPro" id="IPR036390">
    <property type="entry name" value="WH_DNA-bd_sf"/>
</dbReference>
<dbReference type="NCBIfam" id="NF003615">
    <property type="entry name" value="PRK05260.1"/>
    <property type="match status" value="1"/>
</dbReference>
<dbReference type="Pfam" id="PF03882">
    <property type="entry name" value="KicB"/>
    <property type="match status" value="1"/>
</dbReference>
<dbReference type="Pfam" id="PF17193">
    <property type="entry name" value="MukF_C"/>
    <property type="match status" value="1"/>
</dbReference>
<dbReference type="Pfam" id="PF17192">
    <property type="entry name" value="MukF_M"/>
    <property type="match status" value="1"/>
</dbReference>
<dbReference type="PIRSF" id="PIRSF018282">
    <property type="entry name" value="MukF"/>
    <property type="match status" value="1"/>
</dbReference>
<dbReference type="SUPFAM" id="SSF140570">
    <property type="entry name" value="MukF C-terminal domain-like"/>
    <property type="match status" value="1"/>
</dbReference>
<dbReference type="SUPFAM" id="SSF46785">
    <property type="entry name" value="Winged helix' DNA-binding domain"/>
    <property type="match status" value="1"/>
</dbReference>
<evidence type="ECO:0000255" key="1">
    <source>
        <dbReference type="HAMAP-Rule" id="MF_01803"/>
    </source>
</evidence>
<name>MUKF_SALPB</name>